<comment type="function">
    <text>Electron carrier protein. The oxidized form of the cytochrome c heme group can accept an electron from the heme group of the cytochrome c1 subunit of cytochrome reductase. Cytochrome c then transfers this electron to the cytochrome oxidase complex, the final protein carrier in the mitochondrial electron-transport chain.</text>
</comment>
<comment type="subcellular location">
    <subcellularLocation>
        <location>Mitochondrion intermembrane space</location>
    </subcellularLocation>
    <text>Loosely associated with the inner membrane.</text>
</comment>
<comment type="PTM">
    <text>Binds 1 heme c group covalently per subunit.</text>
</comment>
<comment type="similarity">
    <text evidence="2">Belongs to the cytochrome c family.</text>
</comment>
<comment type="online information" name="Protein Spotlight">
    <link uri="https://www.proteinspotlight.org/back_issues/076"/>
    <text>Life shuttle - Issue 76 of November 2006</text>
</comment>
<reference key="1">
    <citation type="journal article" date="1973" name="Phytochemistry">
        <title>The amino acid sequence of Cannabis sativa cytochrome-c.</title>
        <authorList>
            <person name="Wallace D.G."/>
            <person name="Brown R.H."/>
            <person name="Boulter D."/>
        </authorList>
    </citation>
    <scope>PROTEIN SEQUENCE</scope>
    <scope>ACETYLATION AT ALA-1</scope>
    <scope>METHYLATION AT LYS-80 AND LYS-94</scope>
</reference>
<proteinExistence type="evidence at protein level"/>
<organism>
    <name type="scientific">Cannabis sativa</name>
    <name type="common">Hemp</name>
    <name type="synonym">Marijuana</name>
    <dbReference type="NCBI Taxonomy" id="3483"/>
    <lineage>
        <taxon>Eukaryota</taxon>
        <taxon>Viridiplantae</taxon>
        <taxon>Streptophyta</taxon>
        <taxon>Embryophyta</taxon>
        <taxon>Tracheophyta</taxon>
        <taxon>Spermatophyta</taxon>
        <taxon>Magnoliopsida</taxon>
        <taxon>eudicotyledons</taxon>
        <taxon>Gunneridae</taxon>
        <taxon>Pentapetalae</taxon>
        <taxon>rosids</taxon>
        <taxon>fabids</taxon>
        <taxon>Rosales</taxon>
        <taxon>Cannabaceae</taxon>
        <taxon>Cannabis</taxon>
    </lineage>
</organism>
<dbReference type="PIR" id="A00046">
    <property type="entry name" value="CCHECC"/>
</dbReference>
<dbReference type="Proteomes" id="UP000596661">
    <property type="component" value="Unplaced"/>
</dbReference>
<dbReference type="GO" id="GO:0005758">
    <property type="term" value="C:mitochondrial intermembrane space"/>
    <property type="evidence" value="ECO:0007669"/>
    <property type="project" value="UniProtKB-SubCell"/>
</dbReference>
<dbReference type="GO" id="GO:0009055">
    <property type="term" value="F:electron transfer activity"/>
    <property type="evidence" value="ECO:0007669"/>
    <property type="project" value="InterPro"/>
</dbReference>
<dbReference type="GO" id="GO:0020037">
    <property type="term" value="F:heme binding"/>
    <property type="evidence" value="ECO:0007669"/>
    <property type="project" value="InterPro"/>
</dbReference>
<dbReference type="GO" id="GO:0046872">
    <property type="term" value="F:metal ion binding"/>
    <property type="evidence" value="ECO:0007669"/>
    <property type="project" value="UniProtKB-KW"/>
</dbReference>
<dbReference type="FunFam" id="1.10.760.10:FF:000001">
    <property type="entry name" value="Cytochrome c iso-1"/>
    <property type="match status" value="1"/>
</dbReference>
<dbReference type="Gene3D" id="1.10.760.10">
    <property type="entry name" value="Cytochrome c-like domain"/>
    <property type="match status" value="1"/>
</dbReference>
<dbReference type="InterPro" id="IPR009056">
    <property type="entry name" value="Cyt_c-like_dom"/>
</dbReference>
<dbReference type="InterPro" id="IPR036909">
    <property type="entry name" value="Cyt_c-like_dom_sf"/>
</dbReference>
<dbReference type="InterPro" id="IPR002327">
    <property type="entry name" value="Cyt_c_1A/1B"/>
</dbReference>
<dbReference type="PANTHER" id="PTHR11961">
    <property type="entry name" value="CYTOCHROME C"/>
    <property type="match status" value="1"/>
</dbReference>
<dbReference type="Pfam" id="PF00034">
    <property type="entry name" value="Cytochrom_C"/>
    <property type="match status" value="1"/>
</dbReference>
<dbReference type="PRINTS" id="PR00604">
    <property type="entry name" value="CYTCHRMECIAB"/>
</dbReference>
<dbReference type="SUPFAM" id="SSF46626">
    <property type="entry name" value="Cytochrome c"/>
    <property type="match status" value="1"/>
</dbReference>
<dbReference type="PROSITE" id="PS51007">
    <property type="entry name" value="CYTC"/>
    <property type="match status" value="1"/>
</dbReference>
<accession>P00053</accession>
<name>CYC_CANSA</name>
<protein>
    <recommendedName>
        <fullName>Cytochrome c</fullName>
    </recommendedName>
</protein>
<evidence type="ECO:0000269" key="1">
    <source ref="1"/>
</evidence>
<evidence type="ECO:0000305" key="2"/>
<sequence length="111" mass="12044">ASFBZAPPGBSKAGEKIFKTKCAECHTVGRGAGHKQGPNLNGLFGRQSGTTAGYSYSAANKNMAVTWZZKTLYDYLLNPKKYIPGTKMVFPGLKKPZBRADLIAYLKESTA</sequence>
<feature type="chain" id="PRO_0000108290" description="Cytochrome c">
    <location>
        <begin position="1"/>
        <end position="111"/>
    </location>
</feature>
<feature type="binding site" description="covalent">
    <location>
        <position position="22"/>
    </location>
    <ligand>
        <name>heme c</name>
        <dbReference type="ChEBI" id="CHEBI:61717"/>
    </ligand>
</feature>
<feature type="binding site" description="covalent">
    <location>
        <position position="25"/>
    </location>
    <ligand>
        <name>heme c</name>
        <dbReference type="ChEBI" id="CHEBI:61717"/>
    </ligand>
</feature>
<feature type="binding site" description="axial binding residue">
    <location>
        <position position="26"/>
    </location>
    <ligand>
        <name>heme c</name>
        <dbReference type="ChEBI" id="CHEBI:61717"/>
    </ligand>
    <ligandPart>
        <name>Fe</name>
        <dbReference type="ChEBI" id="CHEBI:18248"/>
    </ligandPart>
</feature>
<feature type="binding site" description="axial binding residue">
    <location>
        <position position="88"/>
    </location>
    <ligand>
        <name>heme c</name>
        <dbReference type="ChEBI" id="CHEBI:61717"/>
    </ligand>
    <ligandPart>
        <name>Fe</name>
        <dbReference type="ChEBI" id="CHEBI:18248"/>
    </ligandPart>
</feature>
<feature type="modified residue" description="N-acetylalanine" evidence="1">
    <location>
        <position position="1"/>
    </location>
</feature>
<feature type="modified residue" description="N6,N6,N6-trimethyllysine" evidence="1">
    <location>
        <position position="80"/>
    </location>
</feature>
<feature type="modified residue" description="N6,N6,N6-trimethyllysine" evidence="1">
    <location>
        <position position="94"/>
    </location>
</feature>
<keyword id="KW-0007">Acetylation</keyword>
<keyword id="KW-0903">Direct protein sequencing</keyword>
<keyword id="KW-0249">Electron transport</keyword>
<keyword id="KW-0349">Heme</keyword>
<keyword id="KW-0408">Iron</keyword>
<keyword id="KW-0479">Metal-binding</keyword>
<keyword id="KW-0488">Methylation</keyword>
<keyword id="KW-0496">Mitochondrion</keyword>
<keyword id="KW-0679">Respiratory chain</keyword>
<keyword id="KW-0813">Transport</keyword>